<dbReference type="EC" id="1.1.98.-" evidence="3"/>
<dbReference type="EMBL" id="AL123456">
    <property type="protein sequence ID" value="CCP44017.1"/>
    <property type="molecule type" value="Genomic_DNA"/>
</dbReference>
<dbReference type="PIR" id="E70753">
    <property type="entry name" value="E70753"/>
</dbReference>
<dbReference type="RefSeq" id="NP_215777.1">
    <property type="nucleotide sequence ID" value="NC_000962.3"/>
</dbReference>
<dbReference type="RefSeq" id="WP_003406364.1">
    <property type="nucleotide sequence ID" value="NZ_NVQJ01000049.1"/>
</dbReference>
<dbReference type="SMR" id="P9WP13"/>
<dbReference type="STRING" id="83332.Rv1261c"/>
<dbReference type="PaxDb" id="83332-Rv1261c"/>
<dbReference type="DNASU" id="887055"/>
<dbReference type="GeneID" id="887055"/>
<dbReference type="KEGG" id="mtu:Rv1261c"/>
<dbReference type="KEGG" id="mtv:RVBD_1261c"/>
<dbReference type="TubercuList" id="Rv1261c"/>
<dbReference type="eggNOG" id="COG3945">
    <property type="taxonomic scope" value="Bacteria"/>
</dbReference>
<dbReference type="InParanoid" id="P9WP13"/>
<dbReference type="OrthoDB" id="8225825at2"/>
<dbReference type="PhylomeDB" id="P9WP13"/>
<dbReference type="Proteomes" id="UP000001584">
    <property type="component" value="Chromosome"/>
</dbReference>
<dbReference type="GO" id="GO:0009274">
    <property type="term" value="C:peptidoglycan-based cell wall"/>
    <property type="evidence" value="ECO:0007005"/>
    <property type="project" value="MTBBASE"/>
</dbReference>
<dbReference type="GO" id="GO:0005886">
    <property type="term" value="C:plasma membrane"/>
    <property type="evidence" value="ECO:0007005"/>
    <property type="project" value="MTBBASE"/>
</dbReference>
<dbReference type="GO" id="GO:0070967">
    <property type="term" value="F:coenzyme F420 binding"/>
    <property type="evidence" value="ECO:0000318"/>
    <property type="project" value="GO_Central"/>
</dbReference>
<dbReference type="GO" id="GO:0016491">
    <property type="term" value="F:oxidoreductase activity"/>
    <property type="evidence" value="ECO:0007669"/>
    <property type="project" value="UniProtKB-KW"/>
</dbReference>
<dbReference type="Gene3D" id="2.30.110.10">
    <property type="entry name" value="Electron Transport, Fmn-binding Protein, Chain A"/>
    <property type="match status" value="1"/>
</dbReference>
<dbReference type="InterPro" id="IPR004378">
    <property type="entry name" value="F420H2_quin_Rdtase"/>
</dbReference>
<dbReference type="InterPro" id="IPR012349">
    <property type="entry name" value="Split_barrel_FMN-bd"/>
</dbReference>
<dbReference type="NCBIfam" id="TIGR00026">
    <property type="entry name" value="hi_GC_TIGR00026"/>
    <property type="match status" value="1"/>
</dbReference>
<dbReference type="PANTHER" id="PTHR39428">
    <property type="entry name" value="F420H(2)-DEPENDENT QUINONE REDUCTASE RV1261C"/>
    <property type="match status" value="1"/>
</dbReference>
<dbReference type="PANTHER" id="PTHR39428:SF1">
    <property type="entry name" value="F420H(2)-DEPENDENT QUINONE REDUCTASE RV1261C"/>
    <property type="match status" value="1"/>
</dbReference>
<dbReference type="Pfam" id="PF04075">
    <property type="entry name" value="F420H2_quin_red"/>
    <property type="match status" value="1"/>
</dbReference>
<reference key="1">
    <citation type="journal article" date="1998" name="Nature">
        <title>Deciphering the biology of Mycobacterium tuberculosis from the complete genome sequence.</title>
        <authorList>
            <person name="Cole S.T."/>
            <person name="Brosch R."/>
            <person name="Parkhill J."/>
            <person name="Garnier T."/>
            <person name="Churcher C.M."/>
            <person name="Harris D.E."/>
            <person name="Gordon S.V."/>
            <person name="Eiglmeier K."/>
            <person name="Gas S."/>
            <person name="Barry C.E. III"/>
            <person name="Tekaia F."/>
            <person name="Badcock K."/>
            <person name="Basham D."/>
            <person name="Brown D."/>
            <person name="Chillingworth T."/>
            <person name="Connor R."/>
            <person name="Davies R.M."/>
            <person name="Devlin K."/>
            <person name="Feltwell T."/>
            <person name="Gentles S."/>
            <person name="Hamlin N."/>
            <person name="Holroyd S."/>
            <person name="Hornsby T."/>
            <person name="Jagels K."/>
            <person name="Krogh A."/>
            <person name="McLean J."/>
            <person name="Moule S."/>
            <person name="Murphy L.D."/>
            <person name="Oliver S."/>
            <person name="Osborne J."/>
            <person name="Quail M.A."/>
            <person name="Rajandream M.A."/>
            <person name="Rogers J."/>
            <person name="Rutter S."/>
            <person name="Seeger K."/>
            <person name="Skelton S."/>
            <person name="Squares S."/>
            <person name="Squares R."/>
            <person name="Sulston J.E."/>
            <person name="Taylor K."/>
            <person name="Whitehead S."/>
            <person name="Barrell B.G."/>
        </authorList>
    </citation>
    <scope>NUCLEOTIDE SEQUENCE [LARGE SCALE GENOMIC DNA]</scope>
    <source>
        <strain>ATCC 25618 / H37Rv</strain>
    </source>
</reference>
<reference key="2">
    <citation type="journal article" date="2005" name="Microbiology">
        <title>Immunogenic membrane-associated proteins of Mycobacterium tuberculosis revealed by proteomics.</title>
        <authorList>
            <person name="Sinha S."/>
            <person name="Kosalai K."/>
            <person name="Arora S."/>
            <person name="Namane A."/>
            <person name="Sharma P."/>
            <person name="Gaikwad A.N."/>
            <person name="Brodin P."/>
            <person name="Cole S.T."/>
        </authorList>
    </citation>
    <scope>IDENTIFICATION BY MASS SPECTROMETRY</scope>
    <scope>SUBCELLULAR LOCATION</scope>
    <source>
        <strain>H37Rv</strain>
    </source>
</reference>
<reference key="3">
    <citation type="journal article" date="2011" name="Mol. Cell. Proteomics">
        <title>Proteogenomic analysis of Mycobacterium tuberculosis by high resolution mass spectrometry.</title>
        <authorList>
            <person name="Kelkar D.S."/>
            <person name="Kumar D."/>
            <person name="Kumar P."/>
            <person name="Balakrishnan L."/>
            <person name="Muthusamy B."/>
            <person name="Yadav A.K."/>
            <person name="Shrivastava P."/>
            <person name="Marimuthu A."/>
            <person name="Anand S."/>
            <person name="Sundaram H."/>
            <person name="Kingsbury R."/>
            <person name="Harsha H.C."/>
            <person name="Nair B."/>
            <person name="Prasad T.S."/>
            <person name="Chauhan D.S."/>
            <person name="Katoch K."/>
            <person name="Katoch V.M."/>
            <person name="Kumar P."/>
            <person name="Chaerkady R."/>
            <person name="Ramachandran S."/>
            <person name="Dash D."/>
            <person name="Pandey A."/>
        </authorList>
    </citation>
    <scope>IDENTIFICATION BY MASS SPECTROMETRY [LARGE SCALE ANALYSIS]</scope>
    <source>
        <strain>ATCC 25618 / H37Rv</strain>
    </source>
</reference>
<reference key="4">
    <citation type="journal article" date="2013" name="Mol. Microbiol.">
        <title>A novel F(420)-dependent anti-oxidant mechanism protects Mycobacterium tuberculosis against oxidative stress and bactericidal agents.</title>
        <authorList>
            <person name="Gurumurthy M."/>
            <person name="Rao M."/>
            <person name="Mukherjee T."/>
            <person name="Rao S.P."/>
            <person name="Boshoff H.I."/>
            <person name="Dick T."/>
            <person name="Barry C.E. III"/>
            <person name="Manjunatha U.H."/>
        </authorList>
    </citation>
    <scope>FUNCTION AS A F420-DEPENDENT QUINONE REDUCTASE</scope>
    <scope>CATALYTIC ACTIVITY</scope>
    <scope>BIOPHYSICOCHEMICAL PROPERTIES</scope>
    <source>
        <strain>ATCC 27294 / TMC 102 / H37Rv</strain>
    </source>
</reference>
<organism>
    <name type="scientific">Mycobacterium tuberculosis (strain ATCC 25618 / H37Rv)</name>
    <dbReference type="NCBI Taxonomy" id="83332"/>
    <lineage>
        <taxon>Bacteria</taxon>
        <taxon>Bacillati</taxon>
        <taxon>Actinomycetota</taxon>
        <taxon>Actinomycetes</taxon>
        <taxon>Mycobacteriales</taxon>
        <taxon>Mycobacteriaceae</taxon>
        <taxon>Mycobacterium</taxon>
        <taxon>Mycobacterium tuberculosis complex</taxon>
    </lineage>
</organism>
<accession>P9WP13</accession>
<accession>L0T6C5</accession>
<accession>P64787</accession>
<accession>Q11057</accession>
<proteinExistence type="evidence at protein level"/>
<evidence type="ECO:0000250" key="1">
    <source>
        <dbReference type="UniProtKB" id="P9WP15"/>
    </source>
</evidence>
<evidence type="ECO:0000269" key="2">
    <source>
    </source>
</evidence>
<evidence type="ECO:0000269" key="3">
    <source>
    </source>
</evidence>
<evidence type="ECO:0000303" key="4">
    <source>
    </source>
</evidence>
<evidence type="ECO:0000305" key="5"/>
<comment type="function">
    <text evidence="3">Involved in a F420-dependent anti-oxidant mechanism that protects M.tuberculosis against oxidative stress and bactericidal agents. Catalyzes the F420H(2)-dependent two-electron reduction of quinones to dihydroquinones, thereby preventing the formation of cytotoxic semiquinones obtained by the one-electron reduction pathway. In vitro, catalyzes the reduction of menadione to menadiol; since menaquinone is the sole quinone electron carrier in the respiratory chain in M.tuberculosis, the physiological electron acceptor for Fqr-mediated F420H(2) oxidation is therefore likely to be the endogenous menaquinone found in the membrane fraction of M.tuberculosis.</text>
</comment>
<comment type="catalytic activity">
    <reaction evidence="3">
        <text>oxidized coenzyme F420-(gamma-L-Glu)(n) + a quinol + H(+) = reduced coenzyme F420-(gamma-L-Glu)(n) + a quinone</text>
        <dbReference type="Rhea" id="RHEA:39663"/>
        <dbReference type="Rhea" id="RHEA-COMP:12939"/>
        <dbReference type="Rhea" id="RHEA-COMP:14378"/>
        <dbReference type="ChEBI" id="CHEBI:15378"/>
        <dbReference type="ChEBI" id="CHEBI:24646"/>
        <dbReference type="ChEBI" id="CHEBI:132124"/>
        <dbReference type="ChEBI" id="CHEBI:133980"/>
        <dbReference type="ChEBI" id="CHEBI:139511"/>
    </reaction>
</comment>
<comment type="biophysicochemical properties">
    <kinetics>
        <KM evidence="3">47.1 uM for menadione</KM>
        <text evidence="3">kcat is 18.7 min(-1) for the reduction of menadione.</text>
    </kinetics>
</comment>
<comment type="subcellular location">
    <subcellularLocation>
        <location>Cell membrane</location>
        <topology evidence="2">Peripheral membrane protein</topology>
    </subcellularLocation>
</comment>
<comment type="similarity">
    <text evidence="5">Belongs to the F420H(2)-dependent quinone reductase family.</text>
</comment>
<keyword id="KW-1003">Cell membrane</keyword>
<keyword id="KW-0472">Membrane</keyword>
<keyword id="KW-0560">Oxidoreductase</keyword>
<keyword id="KW-1185">Reference proteome</keyword>
<gene>
    <name type="ordered locus">Rv1261c</name>
    <name type="ORF">MTCY50.21</name>
</gene>
<protein>
    <recommendedName>
        <fullName evidence="4">F420H(2)-dependent quinone reductase Rv1261c</fullName>
        <shortName evidence="4">Fqr</shortName>
        <ecNumber evidence="3">1.1.98.-</ecNumber>
    </recommendedName>
</protein>
<feature type="chain" id="PRO_0000103778" description="F420H(2)-dependent quinone reductase Rv1261c">
    <location>
        <begin position="1"/>
        <end position="149"/>
    </location>
</feature>
<feature type="binding site" evidence="1">
    <location>
        <begin position="48"/>
        <end position="50"/>
    </location>
    <ligand>
        <name>coenzyme F420-(gamma-Glu)n</name>
        <dbReference type="ChEBI" id="CHEBI:133980"/>
    </ligand>
</feature>
<feature type="binding site" evidence="1">
    <location>
        <begin position="54"/>
        <end position="59"/>
    </location>
    <ligand>
        <name>coenzyme F420-(gamma-Glu)n</name>
        <dbReference type="ChEBI" id="CHEBI:133980"/>
    </ligand>
</feature>
<feature type="binding site" evidence="1">
    <location>
        <begin position="70"/>
        <end position="73"/>
    </location>
    <ligand>
        <name>coenzyme F420-(gamma-Glu)n</name>
        <dbReference type="ChEBI" id="CHEBI:133980"/>
    </ligand>
</feature>
<feature type="binding site" evidence="1">
    <location>
        <begin position="81"/>
        <end position="85"/>
    </location>
    <ligand>
        <name>coenzyme F420-(gamma-Glu)n</name>
        <dbReference type="ChEBI" id="CHEBI:133980"/>
    </ligand>
</feature>
<feature type="binding site" evidence="1">
    <location>
        <position position="130"/>
    </location>
    <ligand>
        <name>coenzyme F420-(gamma-Glu)n</name>
        <dbReference type="ChEBI" id="CHEBI:133980"/>
    </ligand>
</feature>
<name>FQR61_MYCTU</name>
<sequence length="149" mass="16756">MDISRWLERHVGVQLLRLHDAIYRGTNGRIGHRIPGAPPSLLLHTTGAKTSQPRTTSLTYARDGDAYLIVASKGGDPRSPGWYHNLKANPDVEINVGPKRFGVTAKPVQPHDPDYARLWQIVNENNANRYTNYQSRTSRPIPVVVLTRR</sequence>